<name>RL18_UREPA</name>
<gene>
    <name evidence="1" type="primary">rplR</name>
    <name evidence="1" type="synonym">rpl18</name>
    <name type="ordered locus">UU247</name>
</gene>
<feature type="chain" id="PRO_0000131379" description="Large ribosomal subunit protein uL18">
    <location>
        <begin position="1"/>
        <end position="121"/>
    </location>
</feature>
<evidence type="ECO:0000255" key="1">
    <source>
        <dbReference type="HAMAP-Rule" id="MF_01337"/>
    </source>
</evidence>
<evidence type="ECO:0000305" key="2"/>
<comment type="function">
    <text evidence="1">This is one of the proteins that bind and probably mediate the attachment of the 5S RNA into the large ribosomal subunit, where it forms part of the central protuberance.</text>
</comment>
<comment type="subunit">
    <text evidence="1">Part of the 50S ribosomal subunit; part of the 5S rRNA/L5/L18/L25 subcomplex. Contacts the 5S and 23S rRNAs.</text>
</comment>
<comment type="similarity">
    <text evidence="1">Belongs to the universal ribosomal protein uL18 family.</text>
</comment>
<sequence>MKRINFSRAKQRALRAKRLHVKIRNLQLAANKPVLVITKTNAHIWAQLICYNKNITLASSSSVQLDLQNGNKDNARLVGVDIAKKALAQGFKQVIFNKNGAKYHGRIKALADAAREAGLEF</sequence>
<keyword id="KW-1185">Reference proteome</keyword>
<keyword id="KW-0687">Ribonucleoprotein</keyword>
<keyword id="KW-0689">Ribosomal protein</keyword>
<keyword id="KW-0694">RNA-binding</keyword>
<keyword id="KW-0699">rRNA-binding</keyword>
<protein>
    <recommendedName>
        <fullName evidence="1">Large ribosomal subunit protein uL18</fullName>
    </recommendedName>
    <alternativeName>
        <fullName evidence="2">50S ribosomal protein L18</fullName>
    </alternativeName>
</protein>
<organism>
    <name type="scientific">Ureaplasma parvum serovar 3 (strain ATCC 700970)</name>
    <dbReference type="NCBI Taxonomy" id="273119"/>
    <lineage>
        <taxon>Bacteria</taxon>
        <taxon>Bacillati</taxon>
        <taxon>Mycoplasmatota</taxon>
        <taxon>Mycoplasmoidales</taxon>
        <taxon>Mycoplasmoidaceae</taxon>
        <taxon>Ureaplasma</taxon>
    </lineage>
</organism>
<proteinExistence type="inferred from homology"/>
<accession>Q9PQP4</accession>
<reference key="1">
    <citation type="journal article" date="2000" name="Nature">
        <title>The complete sequence of the mucosal pathogen Ureaplasma urealyticum.</title>
        <authorList>
            <person name="Glass J.I."/>
            <person name="Lefkowitz E.J."/>
            <person name="Glass J.S."/>
            <person name="Heiner C.R."/>
            <person name="Chen E.Y."/>
            <person name="Cassell G.H."/>
        </authorList>
    </citation>
    <scope>NUCLEOTIDE SEQUENCE [LARGE SCALE GENOMIC DNA]</scope>
    <source>
        <strain>ATCC 700970</strain>
    </source>
</reference>
<dbReference type="EMBL" id="AF222894">
    <property type="protein sequence ID" value="AAF30656.1"/>
    <property type="molecule type" value="Genomic_DNA"/>
</dbReference>
<dbReference type="RefSeq" id="WP_006688827.1">
    <property type="nucleotide sequence ID" value="NC_002162.1"/>
</dbReference>
<dbReference type="SMR" id="Q9PQP4"/>
<dbReference type="STRING" id="273119.UU247"/>
<dbReference type="EnsemblBacteria" id="AAF30656">
    <property type="protein sequence ID" value="AAF30656"/>
    <property type="gene ID" value="UU247"/>
</dbReference>
<dbReference type="GeneID" id="29672667"/>
<dbReference type="KEGG" id="uur:UU247"/>
<dbReference type="eggNOG" id="COG0256">
    <property type="taxonomic scope" value="Bacteria"/>
</dbReference>
<dbReference type="HOGENOM" id="CLU_098841_0_1_14"/>
<dbReference type="OrthoDB" id="9810939at2"/>
<dbReference type="Proteomes" id="UP000000423">
    <property type="component" value="Chromosome"/>
</dbReference>
<dbReference type="GO" id="GO:0022625">
    <property type="term" value="C:cytosolic large ribosomal subunit"/>
    <property type="evidence" value="ECO:0007669"/>
    <property type="project" value="TreeGrafter"/>
</dbReference>
<dbReference type="GO" id="GO:0008097">
    <property type="term" value="F:5S rRNA binding"/>
    <property type="evidence" value="ECO:0007669"/>
    <property type="project" value="TreeGrafter"/>
</dbReference>
<dbReference type="GO" id="GO:0003735">
    <property type="term" value="F:structural constituent of ribosome"/>
    <property type="evidence" value="ECO:0007669"/>
    <property type="project" value="InterPro"/>
</dbReference>
<dbReference type="GO" id="GO:0006412">
    <property type="term" value="P:translation"/>
    <property type="evidence" value="ECO:0007669"/>
    <property type="project" value="UniProtKB-UniRule"/>
</dbReference>
<dbReference type="CDD" id="cd00432">
    <property type="entry name" value="Ribosomal_L18_L5e"/>
    <property type="match status" value="1"/>
</dbReference>
<dbReference type="Gene3D" id="3.30.420.100">
    <property type="match status" value="1"/>
</dbReference>
<dbReference type="HAMAP" id="MF_01337_B">
    <property type="entry name" value="Ribosomal_uL18_B"/>
    <property type="match status" value="1"/>
</dbReference>
<dbReference type="InterPro" id="IPR004389">
    <property type="entry name" value="Ribosomal_uL18_bac-type"/>
</dbReference>
<dbReference type="InterPro" id="IPR005484">
    <property type="entry name" value="Ribosomal_uL18_bac/euk"/>
</dbReference>
<dbReference type="NCBIfam" id="TIGR00060">
    <property type="entry name" value="L18_bact"/>
    <property type="match status" value="1"/>
</dbReference>
<dbReference type="PANTHER" id="PTHR12899">
    <property type="entry name" value="39S RIBOSOMAL PROTEIN L18, MITOCHONDRIAL"/>
    <property type="match status" value="1"/>
</dbReference>
<dbReference type="PANTHER" id="PTHR12899:SF3">
    <property type="entry name" value="LARGE RIBOSOMAL SUBUNIT PROTEIN UL18M"/>
    <property type="match status" value="1"/>
</dbReference>
<dbReference type="Pfam" id="PF00861">
    <property type="entry name" value="Ribosomal_L18p"/>
    <property type="match status" value="1"/>
</dbReference>
<dbReference type="SUPFAM" id="SSF53137">
    <property type="entry name" value="Translational machinery components"/>
    <property type="match status" value="1"/>
</dbReference>